<reference key="1">
    <citation type="journal article" date="1996" name="Microbiology">
        <title>Sequencing of a 65 kb region of the Bacillus subtilis genome containing the lic and cel loci, and creation of a 177 kb contig covering the gnt-sacXY region.</title>
        <authorList>
            <person name="Yoshida K."/>
            <person name="Shindo K."/>
            <person name="Sano H."/>
            <person name="Seki S."/>
            <person name="Fujimura M."/>
            <person name="Yanai N."/>
            <person name="Miwa Y."/>
            <person name="Fujita Y."/>
        </authorList>
    </citation>
    <scope>NUCLEOTIDE SEQUENCE [GENOMIC DNA]</scope>
    <source>
        <strain>168 / BGSC1A1</strain>
    </source>
</reference>
<reference key="2">
    <citation type="journal article" date="1997" name="Nature">
        <title>The complete genome sequence of the Gram-positive bacterium Bacillus subtilis.</title>
        <authorList>
            <person name="Kunst F."/>
            <person name="Ogasawara N."/>
            <person name="Moszer I."/>
            <person name="Albertini A.M."/>
            <person name="Alloni G."/>
            <person name="Azevedo V."/>
            <person name="Bertero M.G."/>
            <person name="Bessieres P."/>
            <person name="Bolotin A."/>
            <person name="Borchert S."/>
            <person name="Borriss R."/>
            <person name="Boursier L."/>
            <person name="Brans A."/>
            <person name="Braun M."/>
            <person name="Brignell S.C."/>
            <person name="Bron S."/>
            <person name="Brouillet S."/>
            <person name="Bruschi C.V."/>
            <person name="Caldwell B."/>
            <person name="Capuano V."/>
            <person name="Carter N.M."/>
            <person name="Choi S.-K."/>
            <person name="Codani J.-J."/>
            <person name="Connerton I.F."/>
            <person name="Cummings N.J."/>
            <person name="Daniel R.A."/>
            <person name="Denizot F."/>
            <person name="Devine K.M."/>
            <person name="Duesterhoeft A."/>
            <person name="Ehrlich S.D."/>
            <person name="Emmerson P.T."/>
            <person name="Entian K.-D."/>
            <person name="Errington J."/>
            <person name="Fabret C."/>
            <person name="Ferrari E."/>
            <person name="Foulger D."/>
            <person name="Fritz C."/>
            <person name="Fujita M."/>
            <person name="Fujita Y."/>
            <person name="Fuma S."/>
            <person name="Galizzi A."/>
            <person name="Galleron N."/>
            <person name="Ghim S.-Y."/>
            <person name="Glaser P."/>
            <person name="Goffeau A."/>
            <person name="Golightly E.J."/>
            <person name="Grandi G."/>
            <person name="Guiseppi G."/>
            <person name="Guy B.J."/>
            <person name="Haga K."/>
            <person name="Haiech J."/>
            <person name="Harwood C.R."/>
            <person name="Henaut A."/>
            <person name="Hilbert H."/>
            <person name="Holsappel S."/>
            <person name="Hosono S."/>
            <person name="Hullo M.-F."/>
            <person name="Itaya M."/>
            <person name="Jones L.-M."/>
            <person name="Joris B."/>
            <person name="Karamata D."/>
            <person name="Kasahara Y."/>
            <person name="Klaerr-Blanchard M."/>
            <person name="Klein C."/>
            <person name="Kobayashi Y."/>
            <person name="Koetter P."/>
            <person name="Koningstein G."/>
            <person name="Krogh S."/>
            <person name="Kumano M."/>
            <person name="Kurita K."/>
            <person name="Lapidus A."/>
            <person name="Lardinois S."/>
            <person name="Lauber J."/>
            <person name="Lazarevic V."/>
            <person name="Lee S.-M."/>
            <person name="Levine A."/>
            <person name="Liu H."/>
            <person name="Masuda S."/>
            <person name="Mauel C."/>
            <person name="Medigue C."/>
            <person name="Medina N."/>
            <person name="Mellado R.P."/>
            <person name="Mizuno M."/>
            <person name="Moestl D."/>
            <person name="Nakai S."/>
            <person name="Noback M."/>
            <person name="Noone D."/>
            <person name="O'Reilly M."/>
            <person name="Ogawa K."/>
            <person name="Ogiwara A."/>
            <person name="Oudega B."/>
            <person name="Park S.-H."/>
            <person name="Parro V."/>
            <person name="Pohl T.M."/>
            <person name="Portetelle D."/>
            <person name="Porwollik S."/>
            <person name="Prescott A.M."/>
            <person name="Presecan E."/>
            <person name="Pujic P."/>
            <person name="Purnelle B."/>
            <person name="Rapoport G."/>
            <person name="Rey M."/>
            <person name="Reynolds S."/>
            <person name="Rieger M."/>
            <person name="Rivolta C."/>
            <person name="Rocha E."/>
            <person name="Roche B."/>
            <person name="Rose M."/>
            <person name="Sadaie Y."/>
            <person name="Sato T."/>
            <person name="Scanlan E."/>
            <person name="Schleich S."/>
            <person name="Schroeter R."/>
            <person name="Scoffone F."/>
            <person name="Sekiguchi J."/>
            <person name="Sekowska A."/>
            <person name="Seror S.J."/>
            <person name="Serror P."/>
            <person name="Shin B.-S."/>
            <person name="Soldo B."/>
            <person name="Sorokin A."/>
            <person name="Tacconi E."/>
            <person name="Takagi T."/>
            <person name="Takahashi H."/>
            <person name="Takemaru K."/>
            <person name="Takeuchi M."/>
            <person name="Tamakoshi A."/>
            <person name="Tanaka T."/>
            <person name="Terpstra P."/>
            <person name="Tognoni A."/>
            <person name="Tosato V."/>
            <person name="Uchiyama S."/>
            <person name="Vandenbol M."/>
            <person name="Vannier F."/>
            <person name="Vassarotti A."/>
            <person name="Viari A."/>
            <person name="Wambutt R."/>
            <person name="Wedler E."/>
            <person name="Wedler H."/>
            <person name="Weitzenegger T."/>
            <person name="Winters P."/>
            <person name="Wipat A."/>
            <person name="Yamamoto H."/>
            <person name="Yamane K."/>
            <person name="Yasumoto K."/>
            <person name="Yata K."/>
            <person name="Yoshida K."/>
            <person name="Yoshikawa H.-F."/>
            <person name="Zumstein E."/>
            <person name="Yoshikawa H."/>
            <person name="Danchin A."/>
        </authorList>
    </citation>
    <scope>NUCLEOTIDE SEQUENCE [LARGE SCALE GENOMIC DNA]</scope>
    <source>
        <strain>168</strain>
    </source>
</reference>
<keyword id="KW-1003">Cell membrane</keyword>
<keyword id="KW-0249">Electron transport</keyword>
<keyword id="KW-0349">Heme</keyword>
<keyword id="KW-0408">Iron</keyword>
<keyword id="KW-0472">Membrane</keyword>
<keyword id="KW-0479">Metal-binding</keyword>
<keyword id="KW-0560">Oxidoreductase</keyword>
<keyword id="KW-1185">Reference proteome</keyword>
<keyword id="KW-1278">Translocase</keyword>
<keyword id="KW-0812">Transmembrane</keyword>
<keyword id="KW-1133">Transmembrane helix</keyword>
<keyword id="KW-0813">Transport</keyword>
<dbReference type="EC" id="7.1.1.7" evidence="1"/>
<dbReference type="EMBL" id="D83026">
    <property type="protein sequence ID" value="BAA11728.1"/>
    <property type="molecule type" value="Genomic_DNA"/>
</dbReference>
<dbReference type="EMBL" id="AL009126">
    <property type="protein sequence ID" value="CAB15901.1"/>
    <property type="molecule type" value="Genomic_DNA"/>
</dbReference>
<dbReference type="PIR" id="B69611">
    <property type="entry name" value="B69611"/>
</dbReference>
<dbReference type="RefSeq" id="NP_391754.1">
    <property type="nucleotide sequence ID" value="NC_000964.3"/>
</dbReference>
<dbReference type="RefSeq" id="WP_003244559.1">
    <property type="nucleotide sequence ID" value="NZ_OZ025638.1"/>
</dbReference>
<dbReference type="SMR" id="P94365"/>
<dbReference type="FunCoup" id="P94365">
    <property type="interactions" value="369"/>
</dbReference>
<dbReference type="STRING" id="224308.BSU38750"/>
<dbReference type="PaxDb" id="224308-BSU38750"/>
<dbReference type="EnsemblBacteria" id="CAB15901">
    <property type="protein sequence ID" value="CAB15901"/>
    <property type="gene ID" value="BSU_38750"/>
</dbReference>
<dbReference type="GeneID" id="937412"/>
<dbReference type="KEGG" id="bsu:BSU38750"/>
<dbReference type="PATRIC" id="fig|224308.179.peg.4194"/>
<dbReference type="eggNOG" id="COG1294">
    <property type="taxonomic scope" value="Bacteria"/>
</dbReference>
<dbReference type="InParanoid" id="P94365"/>
<dbReference type="OrthoDB" id="9776710at2"/>
<dbReference type="PhylomeDB" id="P94365"/>
<dbReference type="BioCyc" id="BSUB:BSU38750-MONOMER"/>
<dbReference type="BioCyc" id="MetaCyc:BSU38750-MONOMER"/>
<dbReference type="BRENDA" id="7.1.1.7">
    <property type="organism ID" value="658"/>
</dbReference>
<dbReference type="Proteomes" id="UP000001570">
    <property type="component" value="Chromosome"/>
</dbReference>
<dbReference type="GO" id="GO:0070069">
    <property type="term" value="C:cytochrome complex"/>
    <property type="evidence" value="ECO:0000318"/>
    <property type="project" value="GO_Central"/>
</dbReference>
<dbReference type="GO" id="GO:0005886">
    <property type="term" value="C:plasma membrane"/>
    <property type="evidence" value="ECO:0007669"/>
    <property type="project" value="UniProtKB-SubCell"/>
</dbReference>
<dbReference type="GO" id="GO:0009055">
    <property type="term" value="F:electron transfer activity"/>
    <property type="evidence" value="ECO:0000318"/>
    <property type="project" value="GO_Central"/>
</dbReference>
<dbReference type="GO" id="GO:0046872">
    <property type="term" value="F:metal ion binding"/>
    <property type="evidence" value="ECO:0007669"/>
    <property type="project" value="UniProtKB-KW"/>
</dbReference>
<dbReference type="GO" id="GO:0016682">
    <property type="term" value="F:oxidoreductase activity, acting on diphenols and related substances as donors, oxygen as acceptor"/>
    <property type="evidence" value="ECO:0000318"/>
    <property type="project" value="GO_Central"/>
</dbReference>
<dbReference type="GO" id="GO:0019646">
    <property type="term" value="P:aerobic electron transport chain"/>
    <property type="evidence" value="ECO:0000318"/>
    <property type="project" value="GO_Central"/>
</dbReference>
<dbReference type="InterPro" id="IPR003317">
    <property type="entry name" value="Cyt-d_oxidase_su2"/>
</dbReference>
<dbReference type="NCBIfam" id="TIGR00203">
    <property type="entry name" value="cydB"/>
    <property type="match status" value="2"/>
</dbReference>
<dbReference type="PANTHER" id="PTHR43141:SF5">
    <property type="entry name" value="CYTOCHROME BD-I UBIQUINOL OXIDASE SUBUNIT 2"/>
    <property type="match status" value="1"/>
</dbReference>
<dbReference type="PANTHER" id="PTHR43141">
    <property type="entry name" value="CYTOCHROME BD2 SUBUNIT II"/>
    <property type="match status" value="1"/>
</dbReference>
<dbReference type="Pfam" id="PF02322">
    <property type="entry name" value="Cyt_bd_oxida_II"/>
    <property type="match status" value="1"/>
</dbReference>
<dbReference type="PIRSF" id="PIRSF000267">
    <property type="entry name" value="Cyt_oxidse_sub2"/>
    <property type="match status" value="1"/>
</dbReference>
<name>CYDB_BACSU</name>
<evidence type="ECO:0000250" key="1">
    <source>
        <dbReference type="UniProtKB" id="P0ABK2"/>
    </source>
</evidence>
<evidence type="ECO:0000255" key="2"/>
<evidence type="ECO:0000305" key="3"/>
<accession>P94365</accession>
<protein>
    <recommendedName>
        <fullName>Cytochrome bd ubiquinol oxidase subunit 2</fullName>
        <ecNumber evidence="1">7.1.1.7</ecNumber>
    </recommendedName>
    <alternativeName>
        <fullName>Cytochrome d ubiquinol oxidase subunit II</fullName>
    </alternativeName>
</protein>
<feature type="chain" id="PRO_0000183924" description="Cytochrome bd ubiquinol oxidase subunit 2">
    <location>
        <begin position="1"/>
        <end position="338"/>
    </location>
</feature>
<feature type="transmembrane region" description="Helical" evidence="2">
    <location>
        <begin position="7"/>
        <end position="27"/>
    </location>
</feature>
<feature type="transmembrane region" description="Helical" evidence="2">
    <location>
        <begin position="50"/>
        <end position="70"/>
    </location>
</feature>
<feature type="transmembrane region" description="Helical" evidence="2">
    <location>
        <begin position="75"/>
        <end position="95"/>
    </location>
</feature>
<feature type="transmembrane region" description="Helical" evidence="2">
    <location>
        <begin position="119"/>
        <end position="139"/>
    </location>
</feature>
<feature type="transmembrane region" description="Helical" evidence="2">
    <location>
        <begin position="163"/>
        <end position="183"/>
    </location>
</feature>
<feature type="transmembrane region" description="Helical" evidence="2">
    <location>
        <begin position="196"/>
        <end position="216"/>
    </location>
</feature>
<feature type="transmembrane region" description="Helical" evidence="2">
    <location>
        <begin position="227"/>
        <end position="247"/>
    </location>
</feature>
<feature type="transmembrane region" description="Helical" evidence="2">
    <location>
        <begin position="256"/>
        <end position="276"/>
    </location>
</feature>
<feature type="transmembrane region" description="Helical" evidence="2">
    <location>
        <begin position="306"/>
        <end position="326"/>
    </location>
</feature>
<gene>
    <name type="primary">cydB</name>
    <name type="synonym">yxkL</name>
    <name type="ordered locus">BSU38750</name>
</gene>
<sequence length="338" mass="37861">MASLHDLWFILVAVLFVGFFFLEGFDFGVGMATRFLGHNELERRVLINTIGPFWDANEVWLLTGAGAIFAAFPNWYATMLSGYYIPFVIVLLALMGRGVAFEFRGKVDHLKWVKVWDWVVFFGSLIPPFVLGVLFTTLFRGMPIDADMNIHAHVSDYINVYSILGGVTVTLLCFQHGLMFITLRTIGDLQNRARKMAQKIMGVVFVAVLAFAALSAYQTDMFTRRGEITIPLAVLIVICFMLAAVFIRKKKDGWTFGMTGAGLALTVGMIFISLFPRVMVSSLHSAYDLTVANASSGDYSLKVMSIAALTLLPFVIGSQIWSYYVFRKRVSHKEPMTY</sequence>
<organism>
    <name type="scientific">Bacillus subtilis (strain 168)</name>
    <dbReference type="NCBI Taxonomy" id="224308"/>
    <lineage>
        <taxon>Bacteria</taxon>
        <taxon>Bacillati</taxon>
        <taxon>Bacillota</taxon>
        <taxon>Bacilli</taxon>
        <taxon>Bacillales</taxon>
        <taxon>Bacillaceae</taxon>
        <taxon>Bacillus</taxon>
    </lineage>
</organism>
<comment type="catalytic activity">
    <reaction evidence="1">
        <text>2 a ubiquinol + O2(in) + 4 H(+)(in) = 2 a ubiquinone + 2 H2O(in) + 4 H(+)(out)</text>
        <dbReference type="Rhea" id="RHEA:40527"/>
        <dbReference type="Rhea" id="RHEA-COMP:9565"/>
        <dbReference type="Rhea" id="RHEA-COMP:9566"/>
        <dbReference type="ChEBI" id="CHEBI:15377"/>
        <dbReference type="ChEBI" id="CHEBI:15378"/>
        <dbReference type="ChEBI" id="CHEBI:15379"/>
        <dbReference type="ChEBI" id="CHEBI:16389"/>
        <dbReference type="ChEBI" id="CHEBI:17976"/>
        <dbReference type="EC" id="7.1.1.7"/>
    </reaction>
</comment>
<comment type="cofactor">
    <cofactor evidence="1">
        <name>heme b</name>
        <dbReference type="ChEBI" id="CHEBI:60344"/>
    </cofactor>
    <text evidence="1">Binds 1 protoheme IX center (heme b595) per heterodimer, in conjunction with CydA.</text>
</comment>
<comment type="cofactor">
    <cofactor evidence="1">
        <name>heme d cis-diol</name>
        <dbReference type="ChEBI" id="CHEBI:62814"/>
    </cofactor>
    <text evidence="1">Binds 1 iron-chlorin (heme d or cytochrome d) per heterodimer, in conjunction with CydA.</text>
</comment>
<comment type="subunit">
    <text evidence="1">Heterodimer of subunits I and II.</text>
</comment>
<comment type="subcellular location">
    <subcellularLocation>
        <location evidence="3">Cell membrane</location>
        <topology evidence="3">Multi-pass membrane protein</topology>
    </subcellularLocation>
</comment>
<comment type="similarity">
    <text evidence="3">Belongs to the cytochrome ubiquinol oxidase subunit 2 family.</text>
</comment>
<proteinExistence type="inferred from homology"/>